<comment type="function">
    <text evidence="1">Thyroid hormone-binding protein. Probably transports thyroxine from the bloodstream to the brain (By similarity).</text>
</comment>
<comment type="subunit">
    <text evidence="1">Homotetramer. Dimer of dimers. In the homotetramer, subunits assemble around a central channel that can accommodate two ligand molecules. Interacts with RBP4 (By similarity).</text>
</comment>
<comment type="subcellular location">
    <subcellularLocation>
        <location evidence="3">Secreted</location>
    </subcellularLocation>
</comment>
<comment type="tissue specificity">
    <text evidence="3">Detected in liver.</text>
</comment>
<comment type="PTM">
    <text evidence="2">Sulfonation of the reactive cysteine Cys-32 enhances the stability of the native conformation of TTR, avoiding misassembly of the protein leading to amyloid formation.</text>
</comment>
<comment type="similarity">
    <text evidence="4">Belongs to the transthyretin family.</text>
</comment>
<gene>
    <name type="primary">TTR</name>
</gene>
<organism>
    <name type="scientific">Macropus giganteus</name>
    <name type="common">Eastern gray kangaroo</name>
    <dbReference type="NCBI Taxonomy" id="9317"/>
    <lineage>
        <taxon>Eukaryota</taxon>
        <taxon>Metazoa</taxon>
        <taxon>Chordata</taxon>
        <taxon>Craniata</taxon>
        <taxon>Vertebrata</taxon>
        <taxon>Euteleostomi</taxon>
        <taxon>Mammalia</taxon>
        <taxon>Metatheria</taxon>
        <taxon>Diprotodontia</taxon>
        <taxon>Macropodidae</taxon>
        <taxon>Macropus</taxon>
    </lineage>
</organism>
<evidence type="ECO:0000250" key="1"/>
<evidence type="ECO:0000250" key="2">
    <source>
        <dbReference type="UniProtKB" id="P02766"/>
    </source>
</evidence>
<evidence type="ECO:0000269" key="3">
    <source>
    </source>
</evidence>
<evidence type="ECO:0000305" key="4"/>
<proteinExistence type="evidence at protein level"/>
<reference key="1">
    <citation type="journal article" date="1997" name="Eur. J. Biochem.">
        <title>Evolution of shorter and more hydrophilic transthyretin N-termini by stepwise conversion of exon 2 into intron 1 sequences (shifting the 3' splice site of intron 1).</title>
        <authorList>
            <person name="Aldred A.R."/>
            <person name="Prapunpoj P."/>
            <person name="Schreiber G."/>
        </authorList>
    </citation>
    <scope>NUCLEOTIDE SEQUENCE [GENOMIC DNA / MRNA]</scope>
    <source>
        <tissue>Liver</tissue>
    </source>
</reference>
<reference key="2">
    <citation type="journal article" date="1993" name="Comp. Biochem. Physiol.">
        <title>Transthyretin expression evolved more recently in liver than in brain.</title>
        <authorList>
            <person name="Schreiber G."/>
            <person name="Pettersson T.M."/>
            <person name="Southwell B.R."/>
            <person name="Aldred A.R."/>
            <person name="Harms P.J."/>
            <person name="Richardson S.J."/>
            <person name="Wettenhall R.E."/>
            <person name="Duan W."/>
            <person name="Nicol S.C."/>
        </authorList>
    </citation>
    <scope>PROTEIN SEQUENCE OF 23-41</scope>
    <scope>SUBCELLULAR LOCATION</scope>
    <scope>TISSUE SPECIFICITY</scope>
    <source>
        <tissue>Liver</tissue>
    </source>
</reference>
<keyword id="KW-0903">Direct protein sequencing</keyword>
<keyword id="KW-0301">Gamma-carboxyglutamic acid</keyword>
<keyword id="KW-0372">Hormone</keyword>
<keyword id="KW-0964">Secreted</keyword>
<keyword id="KW-0732">Signal</keyword>
<keyword id="KW-0765">Sulfation</keyword>
<keyword id="KW-0795">Thyroid hormone</keyword>
<keyword id="KW-0813">Transport</keyword>
<dbReference type="EMBL" id="X97689">
    <property type="protein sequence ID" value="CAA66279.1"/>
    <property type="molecule type" value="mRNA"/>
</dbReference>
<dbReference type="EMBL" id="X97971">
    <property type="protein sequence ID" value="CAA66614.1"/>
    <property type="molecule type" value="Genomic_DNA"/>
</dbReference>
<dbReference type="EMBL" id="X98220">
    <property type="protein sequence ID" value="CAA66880.1"/>
    <property type="molecule type" value="Genomic_DNA"/>
</dbReference>
<dbReference type="SMR" id="Q29616"/>
<dbReference type="GO" id="GO:0005615">
    <property type="term" value="C:extracellular space"/>
    <property type="evidence" value="ECO:0007669"/>
    <property type="project" value="TreeGrafter"/>
</dbReference>
<dbReference type="GO" id="GO:0005179">
    <property type="term" value="F:hormone activity"/>
    <property type="evidence" value="ECO:0007669"/>
    <property type="project" value="UniProtKB-KW"/>
</dbReference>
<dbReference type="GO" id="GO:0070324">
    <property type="term" value="F:thyroid hormone binding"/>
    <property type="evidence" value="ECO:0007669"/>
    <property type="project" value="TreeGrafter"/>
</dbReference>
<dbReference type="GO" id="GO:0006144">
    <property type="term" value="P:purine nucleobase metabolic process"/>
    <property type="evidence" value="ECO:0007669"/>
    <property type="project" value="TreeGrafter"/>
</dbReference>
<dbReference type="FunFam" id="2.60.40.180:FF:000002">
    <property type="entry name" value="Transthyretin"/>
    <property type="match status" value="1"/>
</dbReference>
<dbReference type="Gene3D" id="2.60.40.180">
    <property type="entry name" value="Transthyretin/hydroxyisourate hydrolase domain"/>
    <property type="match status" value="1"/>
</dbReference>
<dbReference type="InterPro" id="IPR023418">
    <property type="entry name" value="Thyroxine_BS"/>
</dbReference>
<dbReference type="InterPro" id="IPR000895">
    <property type="entry name" value="Transthyretin/HIU_hydrolase"/>
</dbReference>
<dbReference type="InterPro" id="IPR023416">
    <property type="entry name" value="Transthyretin/HIU_hydrolase_d"/>
</dbReference>
<dbReference type="InterPro" id="IPR036817">
    <property type="entry name" value="Transthyretin/HIU_hydrolase_sf"/>
</dbReference>
<dbReference type="InterPro" id="IPR023419">
    <property type="entry name" value="Transthyretin_CS"/>
</dbReference>
<dbReference type="PANTHER" id="PTHR10395:SF12">
    <property type="entry name" value="TRANSTHYRETIN"/>
    <property type="match status" value="1"/>
</dbReference>
<dbReference type="PANTHER" id="PTHR10395">
    <property type="entry name" value="URICASE AND TRANSTHYRETIN-RELATED"/>
    <property type="match status" value="1"/>
</dbReference>
<dbReference type="Pfam" id="PF00576">
    <property type="entry name" value="Transthyretin"/>
    <property type="match status" value="1"/>
</dbReference>
<dbReference type="PRINTS" id="PR00189">
    <property type="entry name" value="TRNSTHYRETIN"/>
</dbReference>
<dbReference type="SMART" id="SM00095">
    <property type="entry name" value="TR_THY"/>
    <property type="match status" value="1"/>
</dbReference>
<dbReference type="SUPFAM" id="SSF49472">
    <property type="entry name" value="Transthyretin (synonym: prealbumin)"/>
    <property type="match status" value="1"/>
</dbReference>
<dbReference type="PROSITE" id="PS00768">
    <property type="entry name" value="TRANSTHYRETIN_1"/>
    <property type="match status" value="1"/>
</dbReference>
<dbReference type="PROSITE" id="PS00769">
    <property type="entry name" value="TRANSTHYRETIN_2"/>
    <property type="match status" value="1"/>
</dbReference>
<feature type="signal peptide" evidence="3">
    <location>
        <begin position="1"/>
        <end position="22"/>
    </location>
</feature>
<feature type="chain" id="PRO_0000035758" description="Transthyretin">
    <location>
        <begin position="23"/>
        <end position="149"/>
    </location>
</feature>
<feature type="binding site" evidence="2">
    <location>
        <position position="37"/>
    </location>
    <ligand>
        <name>L-thyroxine</name>
        <dbReference type="ChEBI" id="CHEBI:58448"/>
    </ligand>
</feature>
<feature type="binding site" evidence="2">
    <location>
        <position position="76"/>
    </location>
    <ligand>
        <name>L-thyroxine</name>
        <dbReference type="ChEBI" id="CHEBI:58448"/>
    </ligand>
</feature>
<feature type="binding site" evidence="2">
    <location>
        <position position="139"/>
    </location>
    <ligand>
        <name>L-thyroxine</name>
        <dbReference type="ChEBI" id="CHEBI:58448"/>
    </ligand>
</feature>
<feature type="modified residue" description="Sulfocysteine" evidence="2">
    <location>
        <position position="32"/>
    </location>
</feature>
<feature type="modified residue" description="4-carboxyglutamate" evidence="2">
    <location>
        <position position="64"/>
    </location>
</feature>
<feature type="sequence conflict" description="In Ref. 2; AA sequence." evidence="4" ref="2">
    <original>D</original>
    <variation>L</variation>
    <location>
        <position position="40"/>
    </location>
</feature>
<protein>
    <recommendedName>
        <fullName>Transthyretin</fullName>
    </recommendedName>
    <alternativeName>
        <fullName>Prealbumin</fullName>
    </alternativeName>
</protein>
<sequence length="149" mass="16491">MAFHSLLLLCLAGLAFVSETAAVHHESEHSKCPLMVKVLDAVRGRPAVNVDVKVFKKTEEQTWELFAAGKTNDNGEIHELTTDDKFGEGLYKVEFDTISYWKALGVSPFHEYADVVFTANDAGHRHYTIAAQLSPYSFSTTAIVSNPTE</sequence>
<accession>Q29616</accession>
<accession>Q9TRF3</accession>
<name>TTHY_MACGI</name>